<evidence type="ECO:0000255" key="1">
    <source>
        <dbReference type="HAMAP-Rule" id="MF_00502"/>
    </source>
</evidence>
<evidence type="ECO:0000305" key="2"/>
<feature type="chain" id="PRO_1000126785" description="Large ribosomal subunit protein bL31B">
    <location>
        <begin position="1"/>
        <end position="81"/>
    </location>
</feature>
<reference key="1">
    <citation type="submission" date="2008-10" db="EMBL/GenBank/DDBJ databases">
        <title>Genome sequence of Bacillus cereus B4264.</title>
        <authorList>
            <person name="Dodson R.J."/>
            <person name="Durkin A.S."/>
            <person name="Rosovitz M.J."/>
            <person name="Rasko D.A."/>
            <person name="Hoffmaster A."/>
            <person name="Ravel J."/>
            <person name="Sutton G."/>
        </authorList>
    </citation>
    <scope>NUCLEOTIDE SEQUENCE [LARGE SCALE GENOMIC DNA]</scope>
    <source>
        <strain>B4264</strain>
    </source>
</reference>
<organism>
    <name type="scientific">Bacillus cereus (strain B4264)</name>
    <dbReference type="NCBI Taxonomy" id="405532"/>
    <lineage>
        <taxon>Bacteria</taxon>
        <taxon>Bacillati</taxon>
        <taxon>Bacillota</taxon>
        <taxon>Bacilli</taxon>
        <taxon>Bacillales</taxon>
        <taxon>Bacillaceae</taxon>
        <taxon>Bacillus</taxon>
        <taxon>Bacillus cereus group</taxon>
    </lineage>
</organism>
<accession>B7HFM9</accession>
<proteinExistence type="inferred from homology"/>
<name>RL31B_BACC4</name>
<gene>
    <name evidence="1" type="primary">rpmE2</name>
    <name type="ordered locus">BCB4264_A5454</name>
</gene>
<dbReference type="EMBL" id="CP001176">
    <property type="protein sequence ID" value="ACK61818.1"/>
    <property type="molecule type" value="Genomic_DNA"/>
</dbReference>
<dbReference type="RefSeq" id="WP_000643433.1">
    <property type="nucleotide sequence ID" value="NZ_VEHB01000004.1"/>
</dbReference>
<dbReference type="SMR" id="B7HFM9"/>
<dbReference type="KEGG" id="bcb:BCB4264_A5454"/>
<dbReference type="HOGENOM" id="CLU_114306_2_2_9"/>
<dbReference type="Proteomes" id="UP000007096">
    <property type="component" value="Chromosome"/>
</dbReference>
<dbReference type="GO" id="GO:1990904">
    <property type="term" value="C:ribonucleoprotein complex"/>
    <property type="evidence" value="ECO:0007669"/>
    <property type="project" value="UniProtKB-KW"/>
</dbReference>
<dbReference type="GO" id="GO:0005840">
    <property type="term" value="C:ribosome"/>
    <property type="evidence" value="ECO:0007669"/>
    <property type="project" value="UniProtKB-KW"/>
</dbReference>
<dbReference type="GO" id="GO:0003735">
    <property type="term" value="F:structural constituent of ribosome"/>
    <property type="evidence" value="ECO:0007669"/>
    <property type="project" value="InterPro"/>
</dbReference>
<dbReference type="GO" id="GO:0006412">
    <property type="term" value="P:translation"/>
    <property type="evidence" value="ECO:0007669"/>
    <property type="project" value="UniProtKB-UniRule"/>
</dbReference>
<dbReference type="Gene3D" id="4.10.830.30">
    <property type="entry name" value="Ribosomal protein L31"/>
    <property type="match status" value="1"/>
</dbReference>
<dbReference type="HAMAP" id="MF_00502">
    <property type="entry name" value="Ribosomal_bL31_2"/>
    <property type="match status" value="1"/>
</dbReference>
<dbReference type="InterPro" id="IPR034704">
    <property type="entry name" value="Ribosomal_bL28/bL31-like_sf"/>
</dbReference>
<dbReference type="InterPro" id="IPR002150">
    <property type="entry name" value="Ribosomal_bL31"/>
</dbReference>
<dbReference type="InterPro" id="IPR027493">
    <property type="entry name" value="Ribosomal_bL31_B"/>
</dbReference>
<dbReference type="InterPro" id="IPR042105">
    <property type="entry name" value="Ribosomal_bL31_sf"/>
</dbReference>
<dbReference type="NCBIfam" id="TIGR00105">
    <property type="entry name" value="L31"/>
    <property type="match status" value="1"/>
</dbReference>
<dbReference type="NCBIfam" id="NF002462">
    <property type="entry name" value="PRK01678.1"/>
    <property type="match status" value="1"/>
</dbReference>
<dbReference type="PANTHER" id="PTHR33280">
    <property type="entry name" value="50S RIBOSOMAL PROTEIN L31, CHLOROPLASTIC"/>
    <property type="match status" value="1"/>
</dbReference>
<dbReference type="PANTHER" id="PTHR33280:SF1">
    <property type="entry name" value="LARGE RIBOSOMAL SUBUNIT PROTEIN BL31C"/>
    <property type="match status" value="1"/>
</dbReference>
<dbReference type="Pfam" id="PF01197">
    <property type="entry name" value="Ribosomal_L31"/>
    <property type="match status" value="1"/>
</dbReference>
<dbReference type="PRINTS" id="PR01249">
    <property type="entry name" value="RIBOSOMALL31"/>
</dbReference>
<dbReference type="SUPFAM" id="SSF143800">
    <property type="entry name" value="L28p-like"/>
    <property type="match status" value="1"/>
</dbReference>
<dbReference type="PROSITE" id="PS01143">
    <property type="entry name" value="RIBOSOMAL_L31"/>
    <property type="match status" value="1"/>
</dbReference>
<keyword id="KW-0687">Ribonucleoprotein</keyword>
<keyword id="KW-0689">Ribosomal protein</keyword>
<sequence length="81" mass="9184">MKAGIHPDYKKVVFMDTNTGFKFLSGSTKGSNETVEWEDGNTYPLLKVEISSDSHPFYTGRQKFATADGRVDRFNKKYGLK</sequence>
<protein>
    <recommendedName>
        <fullName evidence="1">Large ribosomal subunit protein bL31B</fullName>
    </recommendedName>
    <alternativeName>
        <fullName evidence="2">50S ribosomal protein L31 type B</fullName>
    </alternativeName>
</protein>
<comment type="subunit">
    <text evidence="1">Part of the 50S ribosomal subunit.</text>
</comment>
<comment type="similarity">
    <text evidence="1">Belongs to the bacterial ribosomal protein bL31 family. Type B subfamily.</text>
</comment>